<name>HED1_YEAST</name>
<sequence>MQQRSNRRSCSYIPLGVHNNAEKSLCTEVAPARKNKRSITTSPIVNINVVERRLFNLELEKQQLRAKNLSENTGGGSPNGGAYLDAKKGVREQDQYQGGPSKELDRLQPPPSMKKSPPRKKKSLKDLIYETNKTFYQVDSNKVKYKVGLSKKQLLPSKTVDN</sequence>
<comment type="function">
    <text evidence="2">Involved in regulation of meiotic recombination and repair of DNA damage. Inhibits RAD51-mediated recombination when the meiotic recombination machinery is impaired.</text>
</comment>
<comment type="subunit">
    <text evidence="2">Interacts with RAD51.</text>
</comment>
<comment type="subcellular location">
    <subcellularLocation>
        <location evidence="2">Nucleus</location>
    </subcellularLocation>
    <subcellularLocation>
        <location evidence="2">Chromosome</location>
    </subcellularLocation>
    <text>Localizes as foci on meiotic chromosomes.</text>
</comment>
<comment type="developmental stage">
    <text evidence="2">Meiosis-specific.</text>
</comment>
<reference key="1">
    <citation type="journal article" date="1997" name="Nature">
        <title>The nucleotide sequence of Saccharomyces cerevisiae chromosome IV.</title>
        <authorList>
            <person name="Jacq C."/>
            <person name="Alt-Moerbe J."/>
            <person name="Andre B."/>
            <person name="Arnold W."/>
            <person name="Bahr A."/>
            <person name="Ballesta J.P.G."/>
            <person name="Bargues M."/>
            <person name="Baron L."/>
            <person name="Becker A."/>
            <person name="Biteau N."/>
            <person name="Bloecker H."/>
            <person name="Blugeon C."/>
            <person name="Boskovic J."/>
            <person name="Brandt P."/>
            <person name="Brueckner M."/>
            <person name="Buitrago M.J."/>
            <person name="Coster F."/>
            <person name="Delaveau T."/>
            <person name="del Rey F."/>
            <person name="Dujon B."/>
            <person name="Eide L.G."/>
            <person name="Garcia-Cantalejo J.M."/>
            <person name="Goffeau A."/>
            <person name="Gomez-Peris A."/>
            <person name="Granotier C."/>
            <person name="Hanemann V."/>
            <person name="Hankeln T."/>
            <person name="Hoheisel J.D."/>
            <person name="Jaeger W."/>
            <person name="Jimenez A."/>
            <person name="Jonniaux J.-L."/>
            <person name="Kraemer C."/>
            <person name="Kuester H."/>
            <person name="Laamanen P."/>
            <person name="Legros Y."/>
            <person name="Louis E.J."/>
            <person name="Moeller-Rieker S."/>
            <person name="Monnet A."/>
            <person name="Moro M."/>
            <person name="Mueller-Auer S."/>
            <person name="Nussbaumer B."/>
            <person name="Paricio N."/>
            <person name="Paulin L."/>
            <person name="Perea J."/>
            <person name="Perez-Alonso M."/>
            <person name="Perez-Ortin J.E."/>
            <person name="Pohl T.M."/>
            <person name="Prydz H."/>
            <person name="Purnelle B."/>
            <person name="Rasmussen S.W."/>
            <person name="Remacha M.A."/>
            <person name="Revuelta J.L."/>
            <person name="Rieger M."/>
            <person name="Salom D."/>
            <person name="Saluz H.P."/>
            <person name="Saiz J.E."/>
            <person name="Saren A.-M."/>
            <person name="Schaefer M."/>
            <person name="Scharfe M."/>
            <person name="Schmidt E.R."/>
            <person name="Schneider C."/>
            <person name="Scholler P."/>
            <person name="Schwarz S."/>
            <person name="Soler-Mira A."/>
            <person name="Urrestarazu L.A."/>
            <person name="Verhasselt P."/>
            <person name="Vissers S."/>
            <person name="Voet M."/>
            <person name="Volckaert G."/>
            <person name="Wagner G."/>
            <person name="Wambutt R."/>
            <person name="Wedler E."/>
            <person name="Wedler H."/>
            <person name="Woelfl S."/>
            <person name="Harris D.E."/>
            <person name="Bowman S."/>
            <person name="Brown D."/>
            <person name="Churcher C.M."/>
            <person name="Connor R."/>
            <person name="Dedman K."/>
            <person name="Gentles S."/>
            <person name="Hamlin N."/>
            <person name="Hunt S."/>
            <person name="Jones L."/>
            <person name="McDonald S."/>
            <person name="Murphy L.D."/>
            <person name="Niblett D."/>
            <person name="Odell C."/>
            <person name="Oliver K."/>
            <person name="Rajandream M.A."/>
            <person name="Richards C."/>
            <person name="Shore L."/>
            <person name="Walsh S.V."/>
            <person name="Barrell B.G."/>
            <person name="Dietrich F.S."/>
            <person name="Mulligan J.T."/>
            <person name="Allen E."/>
            <person name="Araujo R."/>
            <person name="Aviles E."/>
            <person name="Berno A."/>
            <person name="Carpenter J."/>
            <person name="Chen E."/>
            <person name="Cherry J.M."/>
            <person name="Chung E."/>
            <person name="Duncan M."/>
            <person name="Hunicke-Smith S."/>
            <person name="Hyman R.W."/>
            <person name="Komp C."/>
            <person name="Lashkari D."/>
            <person name="Lew H."/>
            <person name="Lin D."/>
            <person name="Mosedale D."/>
            <person name="Nakahara K."/>
            <person name="Namath A."/>
            <person name="Oefner P."/>
            <person name="Oh C."/>
            <person name="Petel F.X."/>
            <person name="Roberts D."/>
            <person name="Schramm S."/>
            <person name="Schroeder M."/>
            <person name="Shogren T."/>
            <person name="Shroff N."/>
            <person name="Winant A."/>
            <person name="Yelton M.A."/>
            <person name="Botstein D."/>
            <person name="Davis R.W."/>
            <person name="Johnston M."/>
            <person name="Andrews S."/>
            <person name="Brinkman R."/>
            <person name="Cooper J."/>
            <person name="Ding H."/>
            <person name="Du Z."/>
            <person name="Favello A."/>
            <person name="Fulton L."/>
            <person name="Gattung S."/>
            <person name="Greco T."/>
            <person name="Hallsworth K."/>
            <person name="Hawkins J."/>
            <person name="Hillier L.W."/>
            <person name="Jier M."/>
            <person name="Johnson D."/>
            <person name="Johnston L."/>
            <person name="Kirsten J."/>
            <person name="Kucaba T."/>
            <person name="Langston Y."/>
            <person name="Latreille P."/>
            <person name="Le T."/>
            <person name="Mardis E."/>
            <person name="Menezes S."/>
            <person name="Miller N."/>
            <person name="Nhan M."/>
            <person name="Pauley A."/>
            <person name="Peluso D."/>
            <person name="Rifkin L."/>
            <person name="Riles L."/>
            <person name="Taich A."/>
            <person name="Trevaskis E."/>
            <person name="Vignati D."/>
            <person name="Wilcox L."/>
            <person name="Wohldman P."/>
            <person name="Vaudin M."/>
            <person name="Wilson R."/>
            <person name="Waterston R."/>
            <person name="Albermann K."/>
            <person name="Hani J."/>
            <person name="Heumann K."/>
            <person name="Kleine K."/>
            <person name="Mewes H.-W."/>
            <person name="Zollner A."/>
            <person name="Zaccaria P."/>
        </authorList>
    </citation>
    <scope>NUCLEOTIDE SEQUENCE [LARGE SCALE GENOMIC DNA]</scope>
    <source>
        <strain>ATCC 204508 / S288c</strain>
    </source>
</reference>
<reference key="2">
    <citation type="journal article" date="2014" name="G3 (Bethesda)">
        <title>The reference genome sequence of Saccharomyces cerevisiae: Then and now.</title>
        <authorList>
            <person name="Engel S.R."/>
            <person name="Dietrich F.S."/>
            <person name="Fisk D.G."/>
            <person name="Binkley G."/>
            <person name="Balakrishnan R."/>
            <person name="Costanzo M.C."/>
            <person name="Dwight S.S."/>
            <person name="Hitz B.C."/>
            <person name="Karra K."/>
            <person name="Nash R.S."/>
            <person name="Weng S."/>
            <person name="Wong E.D."/>
            <person name="Lloyd P."/>
            <person name="Skrzypek M.S."/>
            <person name="Miyasato S.R."/>
            <person name="Simison M."/>
            <person name="Cherry J.M."/>
        </authorList>
    </citation>
    <scope>GENOME REANNOTATION</scope>
    <source>
        <strain>ATCC 204508 / S288c</strain>
    </source>
</reference>
<reference key="3">
    <citation type="journal article" date="2006" name="Genes Dev.">
        <title>Budding yeast Hed1 down-regulates the mitotic recombination machinery when meiotic recombination is impaired.</title>
        <authorList>
            <person name="Tsubouchi H."/>
            <person name="Roeder G.S."/>
        </authorList>
    </citation>
    <scope>FUNCTION</scope>
    <scope>SUBCELLULAR LOCATION</scope>
    <scope>INTERACTION WITH RAD51</scope>
    <scope>DEVELOPMENTAL STAGE</scope>
</reference>
<keyword id="KW-0002">3D-structure</keyword>
<keyword id="KW-0158">Chromosome</keyword>
<keyword id="KW-0227">DNA damage</keyword>
<keyword id="KW-0233">DNA recombination</keyword>
<keyword id="KW-0234">DNA repair</keyword>
<keyword id="KW-0469">Meiosis</keyword>
<keyword id="KW-0539">Nucleus</keyword>
<keyword id="KW-1185">Reference proteome</keyword>
<proteinExistence type="evidence at protein level"/>
<accession>Q03937</accession>
<accession>D6VS01</accession>
<evidence type="ECO:0000256" key="1">
    <source>
        <dbReference type="SAM" id="MobiDB-lite"/>
    </source>
</evidence>
<evidence type="ECO:0000269" key="2">
    <source>
    </source>
</evidence>
<feature type="chain" id="PRO_0000252301" description="Meiosis-specific protein HED1">
    <location>
        <begin position="1"/>
        <end position="162"/>
    </location>
</feature>
<feature type="region of interest" description="Disordered" evidence="1">
    <location>
        <begin position="67"/>
        <end position="124"/>
    </location>
</feature>
<feature type="compositionally biased region" description="Basic and acidic residues" evidence="1">
    <location>
        <begin position="85"/>
        <end position="94"/>
    </location>
</feature>
<dbReference type="EMBL" id="Z49770">
    <property type="protein sequence ID" value="CAA89840.1"/>
    <property type="molecule type" value="Genomic_DNA"/>
</dbReference>
<dbReference type="EMBL" id="BK006938">
    <property type="protein sequence ID" value="DAA11861.1"/>
    <property type="molecule type" value="Genomic_DNA"/>
</dbReference>
<dbReference type="RefSeq" id="NP_001035220.1">
    <property type="nucleotide sequence ID" value="NM_001184688.1"/>
</dbReference>
<dbReference type="PDB" id="9E6N">
    <property type="method" value="EM"/>
    <property type="resolution" value="2.80 A"/>
    <property type="chains" value="G/H/I/J/K=121-153"/>
</dbReference>
<dbReference type="PDBsum" id="9E6N"/>
<dbReference type="EMDB" id="EMD-47573"/>
<dbReference type="SMR" id="Q03937"/>
<dbReference type="BioGRID" id="566604">
    <property type="interactions" value="13"/>
</dbReference>
<dbReference type="FunCoup" id="Q03937">
    <property type="interactions" value="7"/>
</dbReference>
<dbReference type="STRING" id="4932.YDR014W-A"/>
<dbReference type="iPTMnet" id="Q03937"/>
<dbReference type="PaxDb" id="4932-YDR014W-A"/>
<dbReference type="PeptideAtlas" id="Q03937"/>
<dbReference type="EnsemblFungi" id="YDR014W-A_mRNA">
    <property type="protein sequence ID" value="YDR014W-A"/>
    <property type="gene ID" value="YDR014W-A"/>
</dbReference>
<dbReference type="GeneID" id="4036073"/>
<dbReference type="KEGG" id="sce:YDR014W-A"/>
<dbReference type="AGR" id="SGD:S000113613"/>
<dbReference type="SGD" id="S000113613">
    <property type="gene designation" value="HED1"/>
</dbReference>
<dbReference type="VEuPathDB" id="FungiDB:YDR014W-A"/>
<dbReference type="HOGENOM" id="CLU_1636350_0_0_1"/>
<dbReference type="InParanoid" id="Q03937"/>
<dbReference type="OMA" id="REQDQYQ"/>
<dbReference type="OrthoDB" id="4068553at2759"/>
<dbReference type="BioCyc" id="YEAST:G3O-30129-MONOMER"/>
<dbReference type="BioGRID-ORCS" id="4036073">
    <property type="hits" value="1 hit in 10 CRISPR screens"/>
</dbReference>
<dbReference type="PRO" id="PR:Q03937"/>
<dbReference type="Proteomes" id="UP000002311">
    <property type="component" value="Chromosome IV"/>
</dbReference>
<dbReference type="RNAct" id="Q03937">
    <property type="molecule type" value="protein"/>
</dbReference>
<dbReference type="GO" id="GO:0000794">
    <property type="term" value="C:condensed nuclear chromosome"/>
    <property type="evidence" value="ECO:0000314"/>
    <property type="project" value="SGD"/>
</dbReference>
<dbReference type="GO" id="GO:0004857">
    <property type="term" value="F:enzyme inhibitor activity"/>
    <property type="evidence" value="ECO:0000314"/>
    <property type="project" value="SGD"/>
</dbReference>
<dbReference type="GO" id="GO:0006310">
    <property type="term" value="P:DNA recombination"/>
    <property type="evidence" value="ECO:0007669"/>
    <property type="project" value="UniProtKB-KW"/>
</dbReference>
<dbReference type="GO" id="GO:0006281">
    <property type="term" value="P:DNA repair"/>
    <property type="evidence" value="ECO:0007669"/>
    <property type="project" value="UniProtKB-KW"/>
</dbReference>
<dbReference type="GO" id="GO:1903873">
    <property type="term" value="P:negative regulation of DNA recombinase mediator complex assembly"/>
    <property type="evidence" value="ECO:0000314"/>
    <property type="project" value="SGD"/>
</dbReference>
<dbReference type="GO" id="GO:0045950">
    <property type="term" value="P:negative regulation of mitotic recombination"/>
    <property type="evidence" value="ECO:0000314"/>
    <property type="project" value="SGD"/>
</dbReference>
<dbReference type="GO" id="GO:0007130">
    <property type="term" value="P:synaptonemal complex assembly"/>
    <property type="evidence" value="ECO:0000316"/>
    <property type="project" value="SGD"/>
</dbReference>
<organism>
    <name type="scientific">Saccharomyces cerevisiae (strain ATCC 204508 / S288c)</name>
    <name type="common">Baker's yeast</name>
    <dbReference type="NCBI Taxonomy" id="559292"/>
    <lineage>
        <taxon>Eukaryota</taxon>
        <taxon>Fungi</taxon>
        <taxon>Dikarya</taxon>
        <taxon>Ascomycota</taxon>
        <taxon>Saccharomycotina</taxon>
        <taxon>Saccharomycetes</taxon>
        <taxon>Saccharomycetales</taxon>
        <taxon>Saccharomycetaceae</taxon>
        <taxon>Saccharomyces</taxon>
    </lineage>
</organism>
<protein>
    <recommendedName>
        <fullName>Meiosis-specific protein HED1</fullName>
    </recommendedName>
    <alternativeName>
        <fullName>RED1 suppressor protein 1</fullName>
    </alternativeName>
</protein>
<gene>
    <name type="primary">HED1</name>
    <name type="ordered locus">YDR014W-A</name>
    <name type="ORF">YD9335.01</name>
</gene>